<protein>
    <recommendedName>
        <fullName evidence="1">Bis(5'-nucleosyl)-tetraphosphatase, symmetrical</fullName>
        <ecNumber evidence="1">3.6.1.41</ecNumber>
    </recommendedName>
    <alternativeName>
        <fullName evidence="1">Ap4A hydrolase</fullName>
    </alternativeName>
    <alternativeName>
        <fullName evidence="1">Diadenosine 5',5'''-P1,P4-tetraphosphate pyrophosphohydrolase</fullName>
    </alternativeName>
    <alternativeName>
        <fullName evidence="1">Diadenosine tetraphosphatase</fullName>
    </alternativeName>
</protein>
<gene>
    <name evidence="1" type="primary">apaH</name>
    <name type="ordered locus">Sputcn32_0987</name>
</gene>
<proteinExistence type="inferred from homology"/>
<organism>
    <name type="scientific">Shewanella putrefaciens (strain CN-32 / ATCC BAA-453)</name>
    <dbReference type="NCBI Taxonomy" id="319224"/>
    <lineage>
        <taxon>Bacteria</taxon>
        <taxon>Pseudomonadati</taxon>
        <taxon>Pseudomonadota</taxon>
        <taxon>Gammaproteobacteria</taxon>
        <taxon>Alteromonadales</taxon>
        <taxon>Shewanellaceae</taxon>
        <taxon>Shewanella</taxon>
    </lineage>
</organism>
<evidence type="ECO:0000255" key="1">
    <source>
        <dbReference type="HAMAP-Rule" id="MF_00199"/>
    </source>
</evidence>
<accession>A4Y433</accession>
<reference key="1">
    <citation type="submission" date="2007-04" db="EMBL/GenBank/DDBJ databases">
        <title>Complete sequence of Shewanella putrefaciens CN-32.</title>
        <authorList>
            <consortium name="US DOE Joint Genome Institute"/>
            <person name="Copeland A."/>
            <person name="Lucas S."/>
            <person name="Lapidus A."/>
            <person name="Barry K."/>
            <person name="Detter J.C."/>
            <person name="Glavina del Rio T."/>
            <person name="Hammon N."/>
            <person name="Israni S."/>
            <person name="Dalin E."/>
            <person name="Tice H."/>
            <person name="Pitluck S."/>
            <person name="Chain P."/>
            <person name="Malfatti S."/>
            <person name="Shin M."/>
            <person name="Vergez L."/>
            <person name="Schmutz J."/>
            <person name="Larimer F."/>
            <person name="Land M."/>
            <person name="Hauser L."/>
            <person name="Kyrpides N."/>
            <person name="Mikhailova N."/>
            <person name="Romine M.F."/>
            <person name="Fredrickson J."/>
            <person name="Tiedje J."/>
            <person name="Richardson P."/>
        </authorList>
    </citation>
    <scope>NUCLEOTIDE SEQUENCE [LARGE SCALE GENOMIC DNA]</scope>
    <source>
        <strain>CN-32 / ATCC BAA-453</strain>
    </source>
</reference>
<dbReference type="EC" id="3.6.1.41" evidence="1"/>
<dbReference type="EMBL" id="CP000681">
    <property type="protein sequence ID" value="ABP74716.1"/>
    <property type="molecule type" value="Genomic_DNA"/>
</dbReference>
<dbReference type="SMR" id="A4Y433"/>
<dbReference type="STRING" id="319224.Sputcn32_0987"/>
<dbReference type="KEGG" id="spc:Sputcn32_0987"/>
<dbReference type="eggNOG" id="COG0639">
    <property type="taxonomic scope" value="Bacteria"/>
</dbReference>
<dbReference type="HOGENOM" id="CLU_056184_2_0_6"/>
<dbReference type="GO" id="GO:0005737">
    <property type="term" value="C:cytoplasm"/>
    <property type="evidence" value="ECO:0007669"/>
    <property type="project" value="TreeGrafter"/>
</dbReference>
<dbReference type="GO" id="GO:0008803">
    <property type="term" value="F:bis(5'-nucleosyl)-tetraphosphatase (symmetrical) activity"/>
    <property type="evidence" value="ECO:0007669"/>
    <property type="project" value="UniProtKB-UniRule"/>
</dbReference>
<dbReference type="GO" id="GO:0016791">
    <property type="term" value="F:phosphatase activity"/>
    <property type="evidence" value="ECO:0007669"/>
    <property type="project" value="TreeGrafter"/>
</dbReference>
<dbReference type="GO" id="GO:0110154">
    <property type="term" value="P:RNA decapping"/>
    <property type="evidence" value="ECO:0007669"/>
    <property type="project" value="TreeGrafter"/>
</dbReference>
<dbReference type="CDD" id="cd07422">
    <property type="entry name" value="MPP_ApaH"/>
    <property type="match status" value="1"/>
</dbReference>
<dbReference type="Gene3D" id="3.60.21.10">
    <property type="match status" value="1"/>
</dbReference>
<dbReference type="HAMAP" id="MF_00199">
    <property type="entry name" value="ApaH"/>
    <property type="match status" value="1"/>
</dbReference>
<dbReference type="InterPro" id="IPR050126">
    <property type="entry name" value="Ap4A_hydrolase"/>
</dbReference>
<dbReference type="InterPro" id="IPR004617">
    <property type="entry name" value="ApaH"/>
</dbReference>
<dbReference type="InterPro" id="IPR004843">
    <property type="entry name" value="Calcineurin-like_PHP_ApaH"/>
</dbReference>
<dbReference type="InterPro" id="IPR029052">
    <property type="entry name" value="Metallo-depent_PP-like"/>
</dbReference>
<dbReference type="NCBIfam" id="TIGR00668">
    <property type="entry name" value="apaH"/>
    <property type="match status" value="1"/>
</dbReference>
<dbReference type="NCBIfam" id="NF001204">
    <property type="entry name" value="PRK00166.1"/>
    <property type="match status" value="1"/>
</dbReference>
<dbReference type="PANTHER" id="PTHR42850:SF11">
    <property type="entry name" value="BIS(5'-NUCLEOSYL)-TETRAPHOSPHATASE [SYMMETRICAL]"/>
    <property type="match status" value="1"/>
</dbReference>
<dbReference type="PANTHER" id="PTHR42850">
    <property type="entry name" value="METALLOPHOSPHOESTERASE"/>
    <property type="match status" value="1"/>
</dbReference>
<dbReference type="Pfam" id="PF00149">
    <property type="entry name" value="Metallophos"/>
    <property type="match status" value="1"/>
</dbReference>
<dbReference type="PIRSF" id="PIRSF000903">
    <property type="entry name" value="B5n-ttraPtase_sm"/>
    <property type="match status" value="1"/>
</dbReference>
<dbReference type="SUPFAM" id="SSF56300">
    <property type="entry name" value="Metallo-dependent phosphatases"/>
    <property type="match status" value="1"/>
</dbReference>
<comment type="function">
    <text evidence="1">Hydrolyzes diadenosine 5',5'''-P1,P4-tetraphosphate to yield ADP.</text>
</comment>
<comment type="catalytic activity">
    <reaction evidence="1">
        <text>P(1),P(4)-bis(5'-adenosyl) tetraphosphate + H2O = 2 ADP + 2 H(+)</text>
        <dbReference type="Rhea" id="RHEA:24252"/>
        <dbReference type="ChEBI" id="CHEBI:15377"/>
        <dbReference type="ChEBI" id="CHEBI:15378"/>
        <dbReference type="ChEBI" id="CHEBI:58141"/>
        <dbReference type="ChEBI" id="CHEBI:456216"/>
        <dbReference type="EC" id="3.6.1.41"/>
    </reaction>
</comment>
<comment type="similarity">
    <text evidence="1">Belongs to the Ap4A hydrolase family.</text>
</comment>
<sequence>MAHYFVGDVQGCFTELQKVLEKVDFNPSQDELWAVGDLVARGPDSLATLRFFKSLGDSAKTVLGNHDLHLMAIHGKLKRDKPSDNLKALLKADDINELIDWLRQQPLMRELPEQQLIMTHAGVPPQWSLETLRQESALVSHALKQDDYLEALISQMYTDSAERWEPTALGIARLRFCINALTRMRYLYVDGHLNFDCKQPPQDCTDPQLRPWYEYTSPLRQSHTLVFGHWAALMGNVNDKKLKALDTGCCWGEHLTLWHLEKDQKITQKRLKKS</sequence>
<keyword id="KW-0378">Hydrolase</keyword>
<name>APAH_SHEPC</name>
<feature type="chain" id="PRO_1000012092" description="Bis(5'-nucleosyl)-tetraphosphatase, symmetrical">
    <location>
        <begin position="1"/>
        <end position="274"/>
    </location>
</feature>